<protein>
    <recommendedName>
        <fullName>Uncharacterized ORF1 protein</fullName>
    </recommendedName>
</protein>
<evidence type="ECO:0000255" key="1"/>
<sequence>MINNQTNKKGPQLERVHFGSTQVVGKSTKRRQRGTKLDIEYTVRRNDAPKEQKFLISEIFDEKLDKQIKHEKKQNHTFIKPKLSLVIKEEQHITKKVLRGKERAATHAFMKEMVESNKIQPSWNVEYEKEIDEVDLFFMKKKTKPFSGFSIKELRDSLIVQSDDKNMAQPTVMSSIDEIVTPREEISVSAISEQLASLMERVDKLEKMNAALEEENKQLKKEREATIKSVKKEAKKIKQEKPQIVKKTQHKSLGVNLKITKTKVVGQEQCLEIENTQHKKFVEKPSMPLKVSKKMTEHQLKKTIRTWYEFDPSKLVQHQKEVLNSVVTNTTFADKVRETGIPKQKIRYVAKPPAEEKRSIHFYGYKPKGIPNKVWWNWVTTGTAMDAYEKADRYLYHQFKREMMIYRNKWVKFSKEFNPYLSKPKMVWEENTWEYEYKTDVPYNFILKWRQLVQTYKPNTPIQADWYKISQKQQC</sequence>
<reference key="1">
    <citation type="journal article" date="2006" name="J. Gen. Virol.">
        <title>Nora virus, a persistent virus in Drosophila, defines a new picorna-like virus family.</title>
        <authorList>
            <person name="Habayeb M.S."/>
            <person name="Ekengren S.K."/>
            <person name="Hultmark D."/>
        </authorList>
    </citation>
    <scope>NUCLEOTIDE SEQUENCE [GENOMIC RNA]</scope>
</reference>
<organism>
    <name type="scientific">Nora virus</name>
    <dbReference type="NCBI Taxonomy" id="3071212"/>
    <lineage>
        <taxon>Viruses</taxon>
        <taxon>Riboviria</taxon>
        <taxon>Orthornavirae</taxon>
        <taxon>Pisuviricota</taxon>
        <taxon>Pisoniviricetes</taxon>
        <taxon>Picornavirales</taxon>
        <taxon>Noraviridae</taxon>
        <taxon>Orthonoravirus</taxon>
        <taxon>Orthonoravirus melanogastri</taxon>
    </lineage>
</organism>
<keyword id="KW-0175">Coiled coil</keyword>
<feature type="chain" id="PRO_0000283694" description="Uncharacterized ORF1 protein">
    <location>
        <begin position="1"/>
        <end position="475"/>
    </location>
</feature>
<feature type="coiled-coil region" evidence="1">
    <location>
        <begin position="185"/>
        <end position="244"/>
    </location>
</feature>
<proteinExistence type="predicted"/>
<accession>Q27YH0</accession>
<gene>
    <name type="ORF">ORF1</name>
</gene>
<organismHost>
    <name type="scientific">Drosophila melanogaster</name>
    <name type="common">Fruit fly</name>
    <dbReference type="NCBI Taxonomy" id="7227"/>
</organismHost>
<dbReference type="EMBL" id="DQ321720">
    <property type="protein sequence ID" value="ABC55267.1"/>
    <property type="molecule type" value="Genomic_RNA"/>
</dbReference>
<dbReference type="SMR" id="Q27YH0"/>
<name>YORF1_NORAV</name>